<keyword id="KW-0716">Sensory transduction</keyword>
<keyword id="KW-0844">Vision</keyword>
<sequence length="389" mass="43049">MADGSKVFKKTSPDGKITVYLAKRDYVDHVEFVEPVDGMIVIDPEYQKEKKVFVTMTCAFRYGRDDMELIGLSFRKDIYVQSCQVHPPLPGEKKALTPLQEKLKAKLGANAFPFSFNMATNLPCSVTLQPGPEDSGKACGVDFEVKGFWGDDVEEKVSKKNVARLIIRKVQYAPETAGAAPHAEITKQFMMSDKPLQLEASLNKEIHYHGEPIIVNVKINNSTNKIVKKIKITVEQITDVVLYSLDKYTKVVCCEEMNDTVAANSAFTKAYQVTPLLANNTEKRGLALDGKLKHGDTNLASSTTLRPGMDKEVMGILVSYKIRVNLMASRGGILGDLISSDVSVELPLILMHPKPAEGTTSAEDVVIEEFARQKLQGEQDDDEDKEEAS</sequence>
<protein>
    <recommendedName>
        <fullName>Arrestin-C</fullName>
    </recommendedName>
    <alternativeName>
        <fullName>Cone arrestin</fullName>
    </alternativeName>
</protein>
<accession>P51482</accession>
<comment type="function">
    <text>May play a role in an as yet undefined retina-specific signal transduction. Could bind to photoactivated-phosphorylated red/green opsins.</text>
</comment>
<comment type="tissue specificity">
    <text>Retina and pineal gland.</text>
</comment>
<comment type="similarity">
    <text evidence="1">Belongs to the arrestin family.</text>
</comment>
<organism>
    <name type="scientific">Lithobates pipiens</name>
    <name type="common">Northern leopard frog</name>
    <name type="synonym">Rana pipiens</name>
    <dbReference type="NCBI Taxonomy" id="8404"/>
    <lineage>
        <taxon>Eukaryota</taxon>
        <taxon>Metazoa</taxon>
        <taxon>Chordata</taxon>
        <taxon>Craniata</taxon>
        <taxon>Vertebrata</taxon>
        <taxon>Euteleostomi</taxon>
        <taxon>Amphibia</taxon>
        <taxon>Batrachia</taxon>
        <taxon>Anura</taxon>
        <taxon>Neobatrachia</taxon>
        <taxon>Ranoidea</taxon>
        <taxon>Ranidae</taxon>
        <taxon>Lithobates</taxon>
    </lineage>
</organism>
<feature type="chain" id="PRO_0000205207" description="Arrestin-C">
    <location>
        <begin position="1"/>
        <end position="389"/>
    </location>
</feature>
<reference key="1">
    <citation type="journal article" date="1995" name="Eur. J. Biochem.">
        <title>The sequence of arrestins from rod and cone photoreceptors in the frogs Rana catesbeiana and Rana pipiens. Localization of gene transcripts by reverse-transcription polymerase chain reaction on isolated photoreceptors.</title>
        <authorList>
            <person name="Abdulaeva G."/>
            <person name="Hargrave P.A."/>
            <person name="Smith W.C."/>
        </authorList>
    </citation>
    <scope>NUCLEOTIDE SEQUENCE [MRNA]</scope>
    <source>
        <tissue>Retina</tissue>
    </source>
</reference>
<evidence type="ECO:0000305" key="1"/>
<gene>
    <name type="primary">arr3</name>
</gene>
<name>ARRC_LITPI</name>
<proteinExistence type="evidence at transcript level"/>
<dbReference type="EMBL" id="U30270">
    <property type="protein sequence ID" value="AAC59751.1"/>
    <property type="molecule type" value="mRNA"/>
</dbReference>
<dbReference type="EMBL" id="X92400">
    <property type="protein sequence ID" value="CAA63137.1"/>
    <property type="molecule type" value="mRNA"/>
</dbReference>
<dbReference type="PIR" id="S68172">
    <property type="entry name" value="S68172"/>
</dbReference>
<dbReference type="SMR" id="P51482"/>
<dbReference type="GO" id="GO:0001664">
    <property type="term" value="F:G protein-coupled receptor binding"/>
    <property type="evidence" value="ECO:0007669"/>
    <property type="project" value="TreeGrafter"/>
</dbReference>
<dbReference type="GO" id="GO:0002031">
    <property type="term" value="P:G protein-coupled receptor internalization"/>
    <property type="evidence" value="ECO:0007669"/>
    <property type="project" value="TreeGrafter"/>
</dbReference>
<dbReference type="GO" id="GO:0007165">
    <property type="term" value="P:signal transduction"/>
    <property type="evidence" value="ECO:0007669"/>
    <property type="project" value="InterPro"/>
</dbReference>
<dbReference type="GO" id="GO:0007601">
    <property type="term" value="P:visual perception"/>
    <property type="evidence" value="ECO:0007669"/>
    <property type="project" value="UniProtKB-KW"/>
</dbReference>
<dbReference type="FunFam" id="2.60.40.640:FF:000019">
    <property type="entry name" value="Arrestin 3"/>
    <property type="match status" value="1"/>
</dbReference>
<dbReference type="FunFam" id="2.60.40.840:FF:000002">
    <property type="entry name" value="Arrestin 3"/>
    <property type="match status" value="1"/>
</dbReference>
<dbReference type="Gene3D" id="2.60.40.640">
    <property type="match status" value="1"/>
</dbReference>
<dbReference type="Gene3D" id="2.60.40.840">
    <property type="match status" value="1"/>
</dbReference>
<dbReference type="InterPro" id="IPR000698">
    <property type="entry name" value="Arrestin"/>
</dbReference>
<dbReference type="InterPro" id="IPR014752">
    <property type="entry name" value="Arrestin-like_C"/>
</dbReference>
<dbReference type="InterPro" id="IPR011021">
    <property type="entry name" value="Arrestin-like_N"/>
</dbReference>
<dbReference type="InterPro" id="IPR011022">
    <property type="entry name" value="Arrestin_C-like"/>
</dbReference>
<dbReference type="InterPro" id="IPR017864">
    <property type="entry name" value="Arrestin_CS"/>
</dbReference>
<dbReference type="InterPro" id="IPR014753">
    <property type="entry name" value="Arrestin_N"/>
</dbReference>
<dbReference type="InterPro" id="IPR014756">
    <property type="entry name" value="Ig_E-set"/>
</dbReference>
<dbReference type="PANTHER" id="PTHR11792">
    <property type="entry name" value="ARRESTIN"/>
    <property type="match status" value="1"/>
</dbReference>
<dbReference type="PANTHER" id="PTHR11792:SF19">
    <property type="entry name" value="ARRESTIN-C"/>
    <property type="match status" value="1"/>
</dbReference>
<dbReference type="Pfam" id="PF02752">
    <property type="entry name" value="Arrestin_C"/>
    <property type="match status" value="1"/>
</dbReference>
<dbReference type="Pfam" id="PF00339">
    <property type="entry name" value="Arrestin_N"/>
    <property type="match status" value="1"/>
</dbReference>
<dbReference type="PRINTS" id="PR00309">
    <property type="entry name" value="ARRESTIN"/>
</dbReference>
<dbReference type="SMART" id="SM01017">
    <property type="entry name" value="Arrestin_C"/>
    <property type="match status" value="1"/>
</dbReference>
<dbReference type="SUPFAM" id="SSF81296">
    <property type="entry name" value="E set domains"/>
    <property type="match status" value="2"/>
</dbReference>
<dbReference type="PROSITE" id="PS00295">
    <property type="entry name" value="ARRESTINS"/>
    <property type="match status" value="1"/>
</dbReference>